<gene>
    <name type="primary">PKIA</name>
</gene>
<accession>Q90641</accession>
<accession>Q9PUU7</accession>
<organism>
    <name type="scientific">Gallus gallus</name>
    <name type="common">Chicken</name>
    <dbReference type="NCBI Taxonomy" id="9031"/>
    <lineage>
        <taxon>Eukaryota</taxon>
        <taxon>Metazoa</taxon>
        <taxon>Chordata</taxon>
        <taxon>Craniata</taxon>
        <taxon>Vertebrata</taxon>
        <taxon>Euteleostomi</taxon>
        <taxon>Archelosauria</taxon>
        <taxon>Archosauria</taxon>
        <taxon>Dinosauria</taxon>
        <taxon>Saurischia</taxon>
        <taxon>Theropoda</taxon>
        <taxon>Coelurosauria</taxon>
        <taxon>Aves</taxon>
        <taxon>Neognathae</taxon>
        <taxon>Galloanserae</taxon>
        <taxon>Galliformes</taxon>
        <taxon>Phasianidae</taxon>
        <taxon>Phasianinae</taxon>
        <taxon>Gallus</taxon>
    </lineage>
</organism>
<comment type="function">
    <text evidence="1">Extremely potent competitive inhibitor of cAMP-dependent protein kinase activity, this protein interacts with the catalytic subunit of the enzyme after the cAMP-induced dissociation of its regulatory chains.</text>
</comment>
<comment type="similarity">
    <text evidence="3">Belongs to the PKI family.</text>
</comment>
<evidence type="ECO:0000250" key="1"/>
<evidence type="ECO:0000256" key="2">
    <source>
        <dbReference type="SAM" id="MobiDB-lite"/>
    </source>
</evidence>
<evidence type="ECO:0000305" key="3"/>
<sequence>MTDVESTYADFIASGRTGRRNALHDILVSSPGGNSSELALKLSELDINKAEGEGDAQRNPSEQTGEAQGEAAKQES</sequence>
<proteinExistence type="inferred from homology"/>
<keyword id="KW-0649">Protein kinase inhibitor</keyword>
<keyword id="KW-1185">Reference proteome</keyword>
<protein>
    <recommendedName>
        <fullName>cAMP-dependent protein kinase inhibitor alpha</fullName>
        <shortName>PKI-alpha</shortName>
    </recommendedName>
    <alternativeName>
        <fullName>cAMP-dependent protein kinase inhibitor, kidney isoform</fullName>
    </alternativeName>
</protein>
<name>IPKA_CHICK</name>
<reference key="1">
    <citation type="journal article" date="1995" name="Gene">
        <title>Cloning and sequencing of the cDNA encoding the avian kidney cAMP-dependent protein kinase inhibitor protein.</title>
        <authorList>
            <person name="Marchetto G.S."/>
            <person name="Henry H.L."/>
        </authorList>
    </citation>
    <scope>NUCLEOTIDE SEQUENCE [MRNA]</scope>
    <source>
        <strain>White leghorn</strain>
        <tissue>Kidney</tissue>
    </source>
</reference>
<reference key="2">
    <citation type="journal article" date="1999" name="Biochim. Biophys. Acta">
        <title>Genomic cloning, structure, and regulatory elements of the 1 alpha, 25(OH)2D3 down-regulated gene for cyclic AMP-dependent protein kinase inhibitor.</title>
        <authorList>
            <person name="Rowland-Goldsmith M.A."/>
            <person name="Holmquist B."/>
            <person name="Henry H.L."/>
        </authorList>
    </citation>
    <scope>NUCLEOTIDE SEQUENCE [GENOMIC DNA] OF 1-50</scope>
    <source>
        <strain>White leghorn</strain>
        <tissue>Kidney</tissue>
    </source>
</reference>
<feature type="initiator methionine" description="Removed" evidence="1">
    <location>
        <position position="1"/>
    </location>
</feature>
<feature type="chain" id="PRO_0000154537" description="cAMP-dependent protein kinase inhibitor alpha">
    <location>
        <begin position="2"/>
        <end position="76"/>
    </location>
</feature>
<feature type="region of interest" description="Disordered" evidence="2">
    <location>
        <begin position="49"/>
        <end position="76"/>
    </location>
</feature>
<feature type="site" description="Important for inhibition" evidence="1">
    <location>
        <position position="16"/>
    </location>
</feature>
<feature type="site" description="Important for inhibition" evidence="1">
    <location>
        <position position="19"/>
    </location>
</feature>
<feature type="site" description="Important for inhibition" evidence="1">
    <location>
        <position position="20"/>
    </location>
</feature>
<feature type="modified residue" description="Blocked amino end (Thr)" evidence="1">
    <location>
        <position position="2"/>
    </location>
</feature>
<dbReference type="EMBL" id="U19496">
    <property type="protein sequence ID" value="AAA86697.1"/>
    <property type="molecule type" value="mRNA"/>
</dbReference>
<dbReference type="EMBL" id="AF139056">
    <property type="protein sequence ID" value="AAD30289.1"/>
    <property type="molecule type" value="Genomic_DNA"/>
</dbReference>
<dbReference type="PIR" id="JC4128">
    <property type="entry name" value="JC4128"/>
</dbReference>
<dbReference type="RefSeq" id="NP_001383468.1">
    <property type="nucleotide sequence ID" value="NM_001396539.1"/>
</dbReference>
<dbReference type="RefSeq" id="NP_001383469.1">
    <property type="nucleotide sequence ID" value="NM_001396540.1"/>
</dbReference>
<dbReference type="RefSeq" id="NP_990705.1">
    <property type="nucleotide sequence ID" value="NM_205374.2"/>
</dbReference>
<dbReference type="FunCoup" id="Q90641">
    <property type="interactions" value="23"/>
</dbReference>
<dbReference type="STRING" id="9031.ENSGALP00000070942"/>
<dbReference type="PaxDb" id="9031-ENSGALP00000025326"/>
<dbReference type="Ensembl" id="ENSGALT00010007914.1">
    <property type="protein sequence ID" value="ENSGALP00010004749.1"/>
    <property type="gene ID" value="ENSGALG00010003400.1"/>
</dbReference>
<dbReference type="GeneID" id="396333"/>
<dbReference type="KEGG" id="gga:396333"/>
<dbReference type="CTD" id="5569"/>
<dbReference type="VEuPathDB" id="HostDB:geneid_396333"/>
<dbReference type="eggNOG" id="ENOG502S6JP">
    <property type="taxonomic scope" value="Eukaryota"/>
</dbReference>
<dbReference type="GeneTree" id="ENSGT00530000064276"/>
<dbReference type="HOGENOM" id="CLU_163471_2_0_1"/>
<dbReference type="InParanoid" id="Q90641"/>
<dbReference type="OMA" id="HYKNHFS"/>
<dbReference type="OrthoDB" id="9934738at2759"/>
<dbReference type="PhylomeDB" id="Q90641"/>
<dbReference type="TreeFam" id="TF330809"/>
<dbReference type="PRO" id="PR:Q90641"/>
<dbReference type="Proteomes" id="UP000000539">
    <property type="component" value="Chromosome 2"/>
</dbReference>
<dbReference type="Bgee" id="ENSGALG00000053281">
    <property type="expression patterns" value="Expressed in muscle tissue and 13 other cell types or tissues"/>
</dbReference>
<dbReference type="GO" id="GO:0005737">
    <property type="term" value="C:cytoplasm"/>
    <property type="evidence" value="ECO:0000318"/>
    <property type="project" value="GO_Central"/>
</dbReference>
<dbReference type="GO" id="GO:0005634">
    <property type="term" value="C:nucleus"/>
    <property type="evidence" value="ECO:0000318"/>
    <property type="project" value="GO_Central"/>
</dbReference>
<dbReference type="GO" id="GO:0004862">
    <property type="term" value="F:cAMP-dependent protein kinase inhibitor activity"/>
    <property type="evidence" value="ECO:0000318"/>
    <property type="project" value="GO_Central"/>
</dbReference>
<dbReference type="InterPro" id="IPR004171">
    <property type="entry name" value="cAMP_dep_PKI"/>
</dbReference>
<dbReference type="PANTHER" id="PTHR15416">
    <property type="entry name" value="CAMP-DEPENDENT PROTEIN KINASE INHIBITOR/PKI"/>
    <property type="match status" value="1"/>
</dbReference>
<dbReference type="Pfam" id="PF02827">
    <property type="entry name" value="PKI"/>
    <property type="match status" value="1"/>
</dbReference>
<dbReference type="PIRSF" id="PIRSF001667">
    <property type="entry name" value="PKI"/>
    <property type="match status" value="1"/>
</dbReference>